<organism>
    <name type="scientific">Bos taurus</name>
    <name type="common">Bovine</name>
    <dbReference type="NCBI Taxonomy" id="9913"/>
    <lineage>
        <taxon>Eukaryota</taxon>
        <taxon>Metazoa</taxon>
        <taxon>Chordata</taxon>
        <taxon>Craniata</taxon>
        <taxon>Vertebrata</taxon>
        <taxon>Euteleostomi</taxon>
        <taxon>Mammalia</taxon>
        <taxon>Eutheria</taxon>
        <taxon>Laurasiatheria</taxon>
        <taxon>Artiodactyla</taxon>
        <taxon>Ruminantia</taxon>
        <taxon>Pecora</taxon>
        <taxon>Bovidae</taxon>
        <taxon>Bovinae</taxon>
        <taxon>Bos</taxon>
    </lineage>
</organism>
<name>TM41A_BOVIN</name>
<dbReference type="EMBL" id="BC123868">
    <property type="protein sequence ID" value="AAI23869.1"/>
    <property type="molecule type" value="mRNA"/>
</dbReference>
<dbReference type="RefSeq" id="NP_001068668.1">
    <property type="nucleotide sequence ID" value="NM_001075200.1"/>
</dbReference>
<dbReference type="FunCoup" id="Q08D99">
    <property type="interactions" value="252"/>
</dbReference>
<dbReference type="STRING" id="9913.ENSBTAP00000061884"/>
<dbReference type="PaxDb" id="9913-ENSBTAP00000022752"/>
<dbReference type="Ensembl" id="ENSBTAT00000022752.7">
    <property type="protein sequence ID" value="ENSBTAP00000022752.5"/>
    <property type="gene ID" value="ENSBTAG00000017115.7"/>
</dbReference>
<dbReference type="GeneID" id="505368"/>
<dbReference type="KEGG" id="bta:505368"/>
<dbReference type="CTD" id="90407"/>
<dbReference type="VEuPathDB" id="HostDB:ENSBTAG00000017115"/>
<dbReference type="VGNC" id="VGNC:36085">
    <property type="gene designation" value="TMEM41A"/>
</dbReference>
<dbReference type="eggNOG" id="KOG3140">
    <property type="taxonomic scope" value="Eukaryota"/>
</dbReference>
<dbReference type="GeneTree" id="ENSGT00940000163412"/>
<dbReference type="HOGENOM" id="CLU_038944_0_2_1"/>
<dbReference type="InParanoid" id="Q08D99"/>
<dbReference type="OMA" id="DNRDCLF"/>
<dbReference type="OrthoDB" id="3364966at2759"/>
<dbReference type="TreeFam" id="TF314301"/>
<dbReference type="Proteomes" id="UP000009136">
    <property type="component" value="Chromosome 1"/>
</dbReference>
<dbReference type="Bgee" id="ENSBTAG00000017115">
    <property type="expression patterns" value="Expressed in prostate gland and 107 other cell types or tissues"/>
</dbReference>
<dbReference type="GO" id="GO:0016020">
    <property type="term" value="C:membrane"/>
    <property type="evidence" value="ECO:0007669"/>
    <property type="project" value="UniProtKB-SubCell"/>
</dbReference>
<dbReference type="InterPro" id="IPR045014">
    <property type="entry name" value="TM41A/B"/>
</dbReference>
<dbReference type="InterPro" id="IPR032816">
    <property type="entry name" value="VTT_dom"/>
</dbReference>
<dbReference type="PANTHER" id="PTHR43220">
    <property type="match status" value="1"/>
</dbReference>
<dbReference type="PANTHER" id="PTHR43220:SF21">
    <property type="entry name" value="TRANSMEMBRANE PROTEIN 41A"/>
    <property type="match status" value="1"/>
</dbReference>
<dbReference type="Pfam" id="PF09335">
    <property type="entry name" value="VTT_dom"/>
    <property type="match status" value="1"/>
</dbReference>
<comment type="subcellular location">
    <subcellularLocation>
        <location evidence="3">Membrane</location>
        <topology evidence="3">Multi-pass membrane protein</topology>
    </subcellularLocation>
</comment>
<comment type="domain">
    <text evidence="1">The VTT domain was previously called the SNARE-assoc domain. As there is no evidence that this domain associates with SNARE proteins, it was renamed as VMP1, TMEM41, and TVP38 (VTT) domain.</text>
</comment>
<comment type="similarity">
    <text evidence="3">Belongs to the TMEM41 family.</text>
</comment>
<feature type="signal peptide" evidence="2">
    <location>
        <begin position="1"/>
        <end position="17"/>
    </location>
</feature>
<feature type="chain" id="PRO_0000271774" description="Transmembrane protein 41A">
    <location>
        <begin position="18"/>
        <end position="264"/>
    </location>
</feature>
<feature type="transmembrane region" description="Helical" evidence="2">
    <location>
        <begin position="67"/>
        <end position="87"/>
    </location>
</feature>
<feature type="transmembrane region" description="Helical" evidence="2">
    <location>
        <begin position="90"/>
        <end position="110"/>
    </location>
</feature>
<feature type="transmembrane region" description="Helical" evidence="2">
    <location>
        <begin position="153"/>
        <end position="173"/>
    </location>
</feature>
<feature type="transmembrane region" description="Helical" evidence="2">
    <location>
        <begin position="175"/>
        <end position="195"/>
    </location>
</feature>
<feature type="transmembrane region" description="Helical" evidence="2">
    <location>
        <begin position="219"/>
        <end position="239"/>
    </location>
</feature>
<feature type="region of interest" description="VTT domain" evidence="1">
    <location>
        <begin position="96"/>
        <end position="207"/>
    </location>
</feature>
<sequence>MHSLLGLLLVFAGSTFALYLLSTRLPRASTLVSAEESGDRSLWFPSDLAELRELSEVLREYRKEHQVYVFLLFCSAYLYKQSFAIPGSSFLNVLAGALFGPWLGLLLCCVLTSVGATGCYLLSSVFGKQLVVFYFPDKVALLQKKVEENRNGLFFFLLFLRLFPMTPNWFLNLSAPILNIPIVQFFFSVLIGLIPYNFICVQTGSILSTLTSLDALFSWETAFKLLAIALVALVPGTLIKKFSQKDLRLKETSNTHSLNSRKVT</sequence>
<reference key="1">
    <citation type="submission" date="2006-09" db="EMBL/GenBank/DDBJ databases">
        <authorList>
            <consortium name="NIH - Mammalian Gene Collection (MGC) project"/>
        </authorList>
    </citation>
    <scope>NUCLEOTIDE SEQUENCE [LARGE SCALE MRNA]</scope>
    <source>
        <strain>Hereford</strain>
        <tissue>Basal ganglia</tissue>
    </source>
</reference>
<proteinExistence type="evidence at transcript level"/>
<gene>
    <name type="primary">TMEM41A</name>
</gene>
<keyword id="KW-0472">Membrane</keyword>
<keyword id="KW-1185">Reference proteome</keyword>
<keyword id="KW-0732">Signal</keyword>
<keyword id="KW-0812">Transmembrane</keyword>
<keyword id="KW-1133">Transmembrane helix</keyword>
<accession>Q08D99</accession>
<evidence type="ECO:0000250" key="1">
    <source>
        <dbReference type="UniProtKB" id="Q96HV5"/>
    </source>
</evidence>
<evidence type="ECO:0000255" key="2"/>
<evidence type="ECO:0000305" key="3"/>
<protein>
    <recommendedName>
        <fullName>Transmembrane protein 41A</fullName>
    </recommendedName>
</protein>